<keyword id="KW-0067">ATP-binding</keyword>
<keyword id="KW-0963">Cytoplasm</keyword>
<keyword id="KW-0418">Kinase</keyword>
<keyword id="KW-0479">Metal-binding</keyword>
<keyword id="KW-0545">Nucleotide biosynthesis</keyword>
<keyword id="KW-0547">Nucleotide-binding</keyword>
<keyword id="KW-1185">Reference proteome</keyword>
<keyword id="KW-0808">Transferase</keyword>
<keyword id="KW-0862">Zinc</keyword>
<protein>
    <recommendedName>
        <fullName evidence="1">Adenylate kinase</fullName>
        <shortName evidence="1">AK</shortName>
        <ecNumber evidence="1">2.7.4.3</ecNumber>
    </recommendedName>
    <alternativeName>
        <fullName evidence="1">ATP-AMP transphosphorylase</fullName>
    </alternativeName>
    <alternativeName>
        <fullName evidence="1">ATP:AMP phosphotransferase</fullName>
    </alternativeName>
    <alternativeName>
        <fullName evidence="1">Adenylate monophosphate kinase</fullName>
    </alternativeName>
</protein>
<evidence type="ECO:0000255" key="1">
    <source>
        <dbReference type="HAMAP-Rule" id="MF_00235"/>
    </source>
</evidence>
<feature type="chain" id="PRO_0000158904" description="Adenylate kinase">
    <location>
        <begin position="1"/>
        <end position="224"/>
    </location>
</feature>
<feature type="region of interest" description="NMP" evidence="1">
    <location>
        <begin position="30"/>
        <end position="59"/>
    </location>
</feature>
<feature type="region of interest" description="LID" evidence="1">
    <location>
        <begin position="124"/>
        <end position="161"/>
    </location>
</feature>
<feature type="binding site" evidence="1">
    <location>
        <begin position="10"/>
        <end position="15"/>
    </location>
    <ligand>
        <name>ATP</name>
        <dbReference type="ChEBI" id="CHEBI:30616"/>
    </ligand>
</feature>
<feature type="binding site" evidence="1">
    <location>
        <position position="31"/>
    </location>
    <ligand>
        <name>AMP</name>
        <dbReference type="ChEBI" id="CHEBI:456215"/>
    </ligand>
</feature>
<feature type="binding site" evidence="1">
    <location>
        <position position="36"/>
    </location>
    <ligand>
        <name>AMP</name>
        <dbReference type="ChEBI" id="CHEBI:456215"/>
    </ligand>
</feature>
<feature type="binding site" evidence="1">
    <location>
        <begin position="57"/>
        <end position="59"/>
    </location>
    <ligand>
        <name>AMP</name>
        <dbReference type="ChEBI" id="CHEBI:456215"/>
    </ligand>
</feature>
<feature type="binding site" evidence="1">
    <location>
        <begin position="83"/>
        <end position="86"/>
    </location>
    <ligand>
        <name>AMP</name>
        <dbReference type="ChEBI" id="CHEBI:456215"/>
    </ligand>
</feature>
<feature type="binding site" evidence="1">
    <location>
        <position position="90"/>
    </location>
    <ligand>
        <name>AMP</name>
        <dbReference type="ChEBI" id="CHEBI:456215"/>
    </ligand>
</feature>
<feature type="binding site" evidence="1">
    <location>
        <position position="125"/>
    </location>
    <ligand>
        <name>ATP</name>
        <dbReference type="ChEBI" id="CHEBI:30616"/>
    </ligand>
</feature>
<feature type="binding site" evidence="1">
    <location>
        <position position="128"/>
    </location>
    <ligand>
        <name>Zn(2+)</name>
        <dbReference type="ChEBI" id="CHEBI:29105"/>
        <note>structural</note>
    </ligand>
</feature>
<feature type="binding site" evidence="1">
    <location>
        <position position="131"/>
    </location>
    <ligand>
        <name>Zn(2+)</name>
        <dbReference type="ChEBI" id="CHEBI:29105"/>
        <note>structural</note>
    </ligand>
</feature>
<feature type="binding site" evidence="1">
    <location>
        <begin position="134"/>
        <end position="135"/>
    </location>
    <ligand>
        <name>ATP</name>
        <dbReference type="ChEBI" id="CHEBI:30616"/>
    </ligand>
</feature>
<feature type="binding site" evidence="1">
    <location>
        <position position="148"/>
    </location>
    <ligand>
        <name>Zn(2+)</name>
        <dbReference type="ChEBI" id="CHEBI:29105"/>
        <note>structural</note>
    </ligand>
</feature>
<feature type="binding site" evidence="1">
    <location>
        <position position="151"/>
    </location>
    <ligand>
        <name>Zn(2+)</name>
        <dbReference type="ChEBI" id="CHEBI:29105"/>
        <note>structural</note>
    </ligand>
</feature>
<feature type="binding site" evidence="1">
    <location>
        <position position="158"/>
    </location>
    <ligand>
        <name>AMP</name>
        <dbReference type="ChEBI" id="CHEBI:456215"/>
    </ligand>
</feature>
<feature type="binding site" evidence="1">
    <location>
        <position position="169"/>
    </location>
    <ligand>
        <name>AMP</name>
        <dbReference type="ChEBI" id="CHEBI:456215"/>
    </ligand>
</feature>
<feature type="binding site" evidence="1">
    <location>
        <position position="197"/>
    </location>
    <ligand>
        <name>ATP</name>
        <dbReference type="ChEBI" id="CHEBI:30616"/>
    </ligand>
</feature>
<reference key="1">
    <citation type="journal article" date="2005" name="Genome Res.">
        <title>Complete genome sequence of the hyperthermophilic archaeon Thermococcus kodakaraensis KOD1 and comparison with Pyrococcus genomes.</title>
        <authorList>
            <person name="Fukui T."/>
            <person name="Atomi H."/>
            <person name="Kanai T."/>
            <person name="Matsumi R."/>
            <person name="Fujiwara S."/>
            <person name="Imanaka T."/>
        </authorList>
    </citation>
    <scope>NUCLEOTIDE SEQUENCE [LARGE SCALE GENOMIC DNA]</scope>
    <source>
        <strain>ATCC BAA-918 / JCM 12380 / KOD1</strain>
    </source>
</reference>
<proteinExistence type="inferred from homology"/>
<dbReference type="EC" id="2.7.4.3" evidence="1"/>
<dbReference type="EMBL" id="AP006878">
    <property type="protein sequence ID" value="BAD85001.1"/>
    <property type="molecule type" value="Genomic_DNA"/>
</dbReference>
<dbReference type="RefSeq" id="WP_011249763.1">
    <property type="nucleotide sequence ID" value="NC_006624.1"/>
</dbReference>
<dbReference type="SMR" id="Q5JH68"/>
<dbReference type="STRING" id="69014.TK0812"/>
<dbReference type="EnsemblBacteria" id="BAD85001">
    <property type="protein sequence ID" value="BAD85001"/>
    <property type="gene ID" value="TK0812"/>
</dbReference>
<dbReference type="GeneID" id="78447328"/>
<dbReference type="KEGG" id="tko:TK0812"/>
<dbReference type="PATRIC" id="fig|69014.16.peg.792"/>
<dbReference type="eggNOG" id="arCOG01046">
    <property type="taxonomic scope" value="Archaea"/>
</dbReference>
<dbReference type="HOGENOM" id="CLU_032354_1_2_2"/>
<dbReference type="InParanoid" id="Q5JH68"/>
<dbReference type="OrthoDB" id="31230at2157"/>
<dbReference type="PhylomeDB" id="Q5JH68"/>
<dbReference type="UniPathway" id="UPA00588">
    <property type="reaction ID" value="UER00649"/>
</dbReference>
<dbReference type="Proteomes" id="UP000000536">
    <property type="component" value="Chromosome"/>
</dbReference>
<dbReference type="GO" id="GO:0005737">
    <property type="term" value="C:cytoplasm"/>
    <property type="evidence" value="ECO:0000318"/>
    <property type="project" value="GO_Central"/>
</dbReference>
<dbReference type="GO" id="GO:0004017">
    <property type="term" value="F:adenylate kinase activity"/>
    <property type="evidence" value="ECO:0000318"/>
    <property type="project" value="GO_Central"/>
</dbReference>
<dbReference type="GO" id="GO:0005524">
    <property type="term" value="F:ATP binding"/>
    <property type="evidence" value="ECO:0007669"/>
    <property type="project" value="UniProtKB-UniRule"/>
</dbReference>
<dbReference type="GO" id="GO:0008270">
    <property type="term" value="F:zinc ion binding"/>
    <property type="evidence" value="ECO:0007669"/>
    <property type="project" value="UniProtKB-UniRule"/>
</dbReference>
<dbReference type="GO" id="GO:0044209">
    <property type="term" value="P:AMP salvage"/>
    <property type="evidence" value="ECO:0007669"/>
    <property type="project" value="UniProtKB-UniRule"/>
</dbReference>
<dbReference type="CDD" id="cd01428">
    <property type="entry name" value="ADK"/>
    <property type="match status" value="1"/>
</dbReference>
<dbReference type="FunFam" id="3.40.50.300:FF:000106">
    <property type="entry name" value="Adenylate kinase mitochondrial"/>
    <property type="match status" value="1"/>
</dbReference>
<dbReference type="Gene3D" id="3.40.50.300">
    <property type="entry name" value="P-loop containing nucleotide triphosphate hydrolases"/>
    <property type="match status" value="1"/>
</dbReference>
<dbReference type="HAMAP" id="MF_00235">
    <property type="entry name" value="Adenylate_kinase_Adk"/>
    <property type="match status" value="1"/>
</dbReference>
<dbReference type="InterPro" id="IPR006259">
    <property type="entry name" value="Adenyl_kin_sub"/>
</dbReference>
<dbReference type="InterPro" id="IPR000850">
    <property type="entry name" value="Adenylat/UMP-CMP_kin"/>
</dbReference>
<dbReference type="InterPro" id="IPR033690">
    <property type="entry name" value="Adenylat_kinase_CS"/>
</dbReference>
<dbReference type="InterPro" id="IPR007862">
    <property type="entry name" value="Adenylate_kinase_lid-dom"/>
</dbReference>
<dbReference type="InterPro" id="IPR027417">
    <property type="entry name" value="P-loop_NTPase"/>
</dbReference>
<dbReference type="NCBIfam" id="TIGR01351">
    <property type="entry name" value="adk"/>
    <property type="match status" value="1"/>
</dbReference>
<dbReference type="NCBIfam" id="NF001387">
    <property type="entry name" value="PRK00279.2-5"/>
    <property type="match status" value="1"/>
</dbReference>
<dbReference type="PANTHER" id="PTHR23359">
    <property type="entry name" value="NUCLEOTIDE KINASE"/>
    <property type="match status" value="1"/>
</dbReference>
<dbReference type="Pfam" id="PF00406">
    <property type="entry name" value="ADK"/>
    <property type="match status" value="1"/>
</dbReference>
<dbReference type="Pfam" id="PF05191">
    <property type="entry name" value="ADK_lid"/>
    <property type="match status" value="1"/>
</dbReference>
<dbReference type="PRINTS" id="PR00094">
    <property type="entry name" value="ADENYLTKNASE"/>
</dbReference>
<dbReference type="SUPFAM" id="SSF52540">
    <property type="entry name" value="P-loop containing nucleoside triphosphate hydrolases"/>
    <property type="match status" value="1"/>
</dbReference>
<dbReference type="PROSITE" id="PS00113">
    <property type="entry name" value="ADENYLATE_KINASE"/>
    <property type="match status" value="1"/>
</dbReference>
<gene>
    <name evidence="1" type="primary">adk</name>
    <name type="ordered locus">TK0812</name>
</gene>
<organism>
    <name type="scientific">Thermococcus kodakarensis (strain ATCC BAA-918 / JCM 12380 / KOD1)</name>
    <name type="common">Pyrococcus kodakaraensis (strain KOD1)</name>
    <dbReference type="NCBI Taxonomy" id="69014"/>
    <lineage>
        <taxon>Archaea</taxon>
        <taxon>Methanobacteriati</taxon>
        <taxon>Methanobacteriota</taxon>
        <taxon>Thermococci</taxon>
        <taxon>Thermococcales</taxon>
        <taxon>Thermococcaceae</taxon>
        <taxon>Thermococcus</taxon>
    </lineage>
</organism>
<accession>Q5JH68</accession>
<name>KAD_THEKO</name>
<sequence length="224" mass="26001">MNILIFGPPGSGKSTHSRTIMEKYGLVYISSGDLIRREIERKSSLGREMEAYLSRGDLIPDTIVNTLIISKLRRQRENFILDGYPRTPEQVISLENYLFDHGIKLDLALEIFIDEDTSVERISGRRICPNCGAVYHVKYNPPKVPGICDVCGSELIQRADDREEVVRKRYRIYSKNMEPIIKFYRAKGIYVRVDGDGPISEVWKRIQPLLDYIHSREEKRKEHE</sequence>
<comment type="function">
    <text evidence="1">Catalyzes the reversible transfer of the terminal phosphate group between ATP and AMP. Plays an important role in cellular energy homeostasis and in adenine nucleotide metabolism.</text>
</comment>
<comment type="catalytic activity">
    <reaction evidence="1">
        <text>AMP + ATP = 2 ADP</text>
        <dbReference type="Rhea" id="RHEA:12973"/>
        <dbReference type="ChEBI" id="CHEBI:30616"/>
        <dbReference type="ChEBI" id="CHEBI:456215"/>
        <dbReference type="ChEBI" id="CHEBI:456216"/>
        <dbReference type="EC" id="2.7.4.3"/>
    </reaction>
</comment>
<comment type="pathway">
    <text evidence="1">Purine metabolism; AMP biosynthesis via salvage pathway; AMP from ADP: step 1/1.</text>
</comment>
<comment type="subunit">
    <text evidence="1">Monomer.</text>
</comment>
<comment type="subcellular location">
    <subcellularLocation>
        <location evidence="1">Cytoplasm</location>
    </subcellularLocation>
</comment>
<comment type="domain">
    <text evidence="1">Consists of three domains, a large central CORE domain and two small peripheral domains, NMPbind and LID, which undergo movements during catalysis. The LID domain closes over the site of phosphoryl transfer upon ATP binding. Assembling and dissambling the active center during each catalytic cycle provides an effective means to prevent ATP hydrolysis. Some bacteria have evolved a zinc-coordinating structure that stabilizes the LID domain.</text>
</comment>
<comment type="similarity">
    <text evidence="1">Belongs to the adenylate kinase family.</text>
</comment>